<reference key="1">
    <citation type="journal article" date="2005" name="Nature">
        <title>Sequencing of Aspergillus nidulans and comparative analysis with A. fumigatus and A. oryzae.</title>
        <authorList>
            <person name="Galagan J.E."/>
            <person name="Calvo S.E."/>
            <person name="Cuomo C."/>
            <person name="Ma L.-J."/>
            <person name="Wortman J.R."/>
            <person name="Batzoglou S."/>
            <person name="Lee S.-I."/>
            <person name="Bastuerkmen M."/>
            <person name="Spevak C.C."/>
            <person name="Clutterbuck J."/>
            <person name="Kapitonov V."/>
            <person name="Jurka J."/>
            <person name="Scazzocchio C."/>
            <person name="Farman M.L."/>
            <person name="Butler J."/>
            <person name="Purcell S."/>
            <person name="Harris S."/>
            <person name="Braus G.H."/>
            <person name="Draht O."/>
            <person name="Busch S."/>
            <person name="D'Enfert C."/>
            <person name="Bouchier C."/>
            <person name="Goldman G.H."/>
            <person name="Bell-Pedersen D."/>
            <person name="Griffiths-Jones S."/>
            <person name="Doonan J.H."/>
            <person name="Yu J."/>
            <person name="Vienken K."/>
            <person name="Pain A."/>
            <person name="Freitag M."/>
            <person name="Selker E.U."/>
            <person name="Archer D.B."/>
            <person name="Penalva M.A."/>
            <person name="Oakley B.R."/>
            <person name="Momany M."/>
            <person name="Tanaka T."/>
            <person name="Kumagai T."/>
            <person name="Asai K."/>
            <person name="Machida M."/>
            <person name="Nierman W.C."/>
            <person name="Denning D.W."/>
            <person name="Caddick M.X."/>
            <person name="Hynes M."/>
            <person name="Paoletti M."/>
            <person name="Fischer R."/>
            <person name="Miller B.L."/>
            <person name="Dyer P.S."/>
            <person name="Sachs M.S."/>
            <person name="Osmani S.A."/>
            <person name="Birren B.W."/>
        </authorList>
    </citation>
    <scope>NUCLEOTIDE SEQUENCE [LARGE SCALE GENOMIC DNA]</scope>
    <source>
        <strain>FGSC A4 / ATCC 38163 / CBS 112.46 / NRRL 194 / M139</strain>
    </source>
</reference>
<reference key="2">
    <citation type="journal article" date="2009" name="Fungal Genet. Biol.">
        <title>The 2008 update of the Aspergillus nidulans genome annotation: a community effort.</title>
        <authorList>
            <person name="Wortman J.R."/>
            <person name="Gilsenan J.M."/>
            <person name="Joardar V."/>
            <person name="Deegan J."/>
            <person name="Clutterbuck J."/>
            <person name="Andersen M.R."/>
            <person name="Archer D."/>
            <person name="Bencina M."/>
            <person name="Braus G."/>
            <person name="Coutinho P."/>
            <person name="von Dohren H."/>
            <person name="Doonan J."/>
            <person name="Driessen A.J."/>
            <person name="Durek P."/>
            <person name="Espeso E."/>
            <person name="Fekete E."/>
            <person name="Flipphi M."/>
            <person name="Estrada C.G."/>
            <person name="Geysens S."/>
            <person name="Goldman G."/>
            <person name="de Groot P.W."/>
            <person name="Hansen K."/>
            <person name="Harris S.D."/>
            <person name="Heinekamp T."/>
            <person name="Helmstaedt K."/>
            <person name="Henrissat B."/>
            <person name="Hofmann G."/>
            <person name="Homan T."/>
            <person name="Horio T."/>
            <person name="Horiuchi H."/>
            <person name="James S."/>
            <person name="Jones M."/>
            <person name="Karaffa L."/>
            <person name="Karanyi Z."/>
            <person name="Kato M."/>
            <person name="Keller N."/>
            <person name="Kelly D.E."/>
            <person name="Kiel J.A."/>
            <person name="Kim J.M."/>
            <person name="van der Klei I.J."/>
            <person name="Klis F.M."/>
            <person name="Kovalchuk A."/>
            <person name="Krasevec N."/>
            <person name="Kubicek C.P."/>
            <person name="Liu B."/>
            <person name="Maccabe A."/>
            <person name="Meyer V."/>
            <person name="Mirabito P."/>
            <person name="Miskei M."/>
            <person name="Mos M."/>
            <person name="Mullins J."/>
            <person name="Nelson D.R."/>
            <person name="Nielsen J."/>
            <person name="Oakley B.R."/>
            <person name="Osmani S.A."/>
            <person name="Pakula T."/>
            <person name="Paszewski A."/>
            <person name="Paulsen I."/>
            <person name="Pilsyk S."/>
            <person name="Pocsi I."/>
            <person name="Punt P.J."/>
            <person name="Ram A.F."/>
            <person name="Ren Q."/>
            <person name="Robellet X."/>
            <person name="Robson G."/>
            <person name="Seiboth B."/>
            <person name="van Solingen P."/>
            <person name="Specht T."/>
            <person name="Sun J."/>
            <person name="Taheri-Talesh N."/>
            <person name="Takeshita N."/>
            <person name="Ussery D."/>
            <person name="vanKuyk P.A."/>
            <person name="Visser H."/>
            <person name="van de Vondervoort P.J."/>
            <person name="de Vries R.P."/>
            <person name="Walton J."/>
            <person name="Xiang X."/>
            <person name="Xiong Y."/>
            <person name="Zeng A.P."/>
            <person name="Brandt B.W."/>
            <person name="Cornell M.J."/>
            <person name="van den Hondel C.A."/>
            <person name="Visser J."/>
            <person name="Oliver S.G."/>
            <person name="Turner G."/>
        </authorList>
    </citation>
    <scope>GENOME REANNOTATION</scope>
    <source>
        <strain>FGSC A4 / ATCC 38163 / CBS 112.46 / NRRL 194 / M139</strain>
    </source>
</reference>
<reference key="3">
    <citation type="journal article" date="2006" name="Proc. Natl. Acad. Sci. U.S.A.">
        <title>Development and application of a suite of polysaccharide-degrading enzymes for analyzing plant cell walls.</title>
        <authorList>
            <person name="Bauer S."/>
            <person name="Vasu P."/>
            <person name="Persson S."/>
            <person name="Mort A.J."/>
            <person name="Somerville C.R."/>
        </authorList>
    </citation>
    <scope>FUNCTION</scope>
    <scope>BIOPHYSICOCHEMICAL PROPERTIES</scope>
    <scope>CATALYTIC ACTIVITY</scope>
</reference>
<accession>Q5AQZ4</accession>
<accession>C8VQN8</accession>
<organism>
    <name type="scientific">Emericella nidulans (strain FGSC A4 / ATCC 38163 / CBS 112.46 / NRRL 194 / M139)</name>
    <name type="common">Aspergillus nidulans</name>
    <dbReference type="NCBI Taxonomy" id="227321"/>
    <lineage>
        <taxon>Eukaryota</taxon>
        <taxon>Fungi</taxon>
        <taxon>Dikarya</taxon>
        <taxon>Ascomycota</taxon>
        <taxon>Pezizomycotina</taxon>
        <taxon>Eurotiomycetes</taxon>
        <taxon>Eurotiomycetidae</taxon>
        <taxon>Eurotiales</taxon>
        <taxon>Aspergillaceae</taxon>
        <taxon>Aspergillus</taxon>
        <taxon>Aspergillus subgen. Nidulantes</taxon>
    </lineage>
</organism>
<evidence type="ECO:0000250" key="1"/>
<evidence type="ECO:0000255" key="2"/>
<evidence type="ECO:0000269" key="3">
    <source>
    </source>
</evidence>
<evidence type="ECO:0000305" key="4"/>
<gene>
    <name type="primary">aguA</name>
    <name type="ORF">AN9286</name>
</gene>
<keyword id="KW-0119">Carbohydrate metabolism</keyword>
<keyword id="KW-0325">Glycoprotein</keyword>
<keyword id="KW-0326">Glycosidase</keyword>
<keyword id="KW-0378">Hydrolase</keyword>
<keyword id="KW-0624">Polysaccharide degradation</keyword>
<keyword id="KW-1185">Reference proteome</keyword>
<keyword id="KW-0964">Secreted</keyword>
<keyword id="KW-0732">Signal</keyword>
<keyword id="KW-0858">Xylan degradation</keyword>
<proteinExistence type="evidence at protein level"/>
<feature type="signal peptide" evidence="2">
    <location>
        <begin position="1"/>
        <end position="22"/>
    </location>
</feature>
<feature type="chain" id="PRO_0000393491" description="Alpha-glucuronidase A">
    <location>
        <begin position="23"/>
        <end position="847"/>
    </location>
</feature>
<feature type="glycosylation site" description="N-linked (GlcNAc...) asparagine" evidence="2">
    <location>
        <position position="48"/>
    </location>
</feature>
<feature type="glycosylation site" description="N-linked (GlcNAc...) asparagine" evidence="2">
    <location>
        <position position="78"/>
    </location>
</feature>
<feature type="glycosylation site" description="N-linked (GlcNAc...) asparagine" evidence="2">
    <location>
        <position position="227"/>
    </location>
</feature>
<feature type="glycosylation site" description="N-linked (GlcNAc...) asparagine" evidence="2">
    <location>
        <position position="315"/>
    </location>
</feature>
<feature type="glycosylation site" description="N-linked (GlcNAc...) asparagine" evidence="2">
    <location>
        <position position="349"/>
    </location>
</feature>
<feature type="glycosylation site" description="N-linked (GlcNAc...) asparagine" evidence="2">
    <location>
        <position position="457"/>
    </location>
</feature>
<feature type="glycosylation site" description="N-linked (GlcNAc...) asparagine" evidence="2">
    <location>
        <position position="472"/>
    </location>
</feature>
<feature type="glycosylation site" description="N-linked (GlcNAc...) asparagine" evidence="2">
    <location>
        <position position="534"/>
    </location>
</feature>
<feature type="glycosylation site" description="N-linked (GlcNAc...) asparagine" evidence="2">
    <location>
        <position position="583"/>
    </location>
</feature>
<feature type="glycosylation site" description="N-linked (GlcNAc...) asparagine" evidence="2">
    <location>
        <position position="689"/>
    </location>
</feature>
<feature type="glycosylation site" description="N-linked (GlcNAc...) asparagine" evidence="2">
    <location>
        <position position="738"/>
    </location>
</feature>
<feature type="glycosylation site" description="N-linked (GlcNAc...) asparagine" evidence="2">
    <location>
        <position position="739"/>
    </location>
</feature>
<feature type="glycosylation site" description="N-linked (GlcNAc...) asparagine" evidence="2">
    <location>
        <position position="769"/>
    </location>
</feature>
<comment type="function">
    <text evidence="3">Alpha-glucuronidase involved in the hydrolysis of xylan, a major structural heterogeneous polysaccharide found in plant biomass representing the second most abundant polysaccharide in the biosphere, after cellulose. Releases 4-O-methylglucuronic acid from xylan.</text>
</comment>
<comment type="catalytic activity">
    <reaction evidence="3">
        <text>an alpha-D-glucuronoside + H2O = D-glucuronate + an alcohol</text>
        <dbReference type="Rhea" id="RHEA:20005"/>
        <dbReference type="ChEBI" id="CHEBI:15377"/>
        <dbReference type="ChEBI" id="CHEBI:30879"/>
        <dbReference type="ChEBI" id="CHEBI:58720"/>
        <dbReference type="ChEBI" id="CHEBI:58899"/>
        <dbReference type="EC" id="3.2.1.139"/>
    </reaction>
</comment>
<comment type="biophysicochemical properties">
    <phDependence>
        <text evidence="3">Optimum pH is 4.0.</text>
    </phDependence>
    <temperatureDependence>
        <text evidence="3">Optimum temperature is 30 degrees Celsius.</text>
    </temperatureDependence>
</comment>
<comment type="subcellular location">
    <subcellularLocation>
        <location evidence="1">Secreted</location>
    </subcellularLocation>
</comment>
<comment type="similarity">
    <text evidence="4">Belongs to the glycosyl hydrolase 67 family.</text>
</comment>
<protein>
    <recommendedName>
        <fullName>Alpha-glucuronidase A</fullName>
        <ecNumber evidence="3">3.2.1.139</ecNumber>
    </recommendedName>
    <alternativeName>
        <fullName>Alpha-glucosiduronase A</fullName>
    </alternativeName>
</protein>
<dbReference type="EC" id="3.2.1.139" evidence="3"/>
<dbReference type="EMBL" id="AACD01000172">
    <property type="protein sequence ID" value="EAA66353.1"/>
    <property type="molecule type" value="Genomic_DNA"/>
</dbReference>
<dbReference type="EMBL" id="BN001308">
    <property type="protein sequence ID" value="CBF87334.1"/>
    <property type="molecule type" value="Genomic_DNA"/>
</dbReference>
<dbReference type="RefSeq" id="XP_682555.1">
    <property type="nucleotide sequence ID" value="XM_677463.1"/>
</dbReference>
<dbReference type="SMR" id="Q5AQZ4"/>
<dbReference type="STRING" id="227321.Q5AQZ4"/>
<dbReference type="CAZy" id="GH67">
    <property type="family name" value="Glycoside Hydrolase Family 67"/>
</dbReference>
<dbReference type="GlyCosmos" id="Q5AQZ4">
    <property type="glycosylation" value="13 sites, No reported glycans"/>
</dbReference>
<dbReference type="EnsemblFungi" id="CBF87334">
    <property type="protein sequence ID" value="CBF87334"/>
    <property type="gene ID" value="ANIA_09286"/>
</dbReference>
<dbReference type="KEGG" id="ani:ANIA_09286"/>
<dbReference type="VEuPathDB" id="FungiDB:AN9286"/>
<dbReference type="eggNOG" id="ENOG502QWS4">
    <property type="taxonomic scope" value="Eukaryota"/>
</dbReference>
<dbReference type="HOGENOM" id="CLU_007125_2_0_1"/>
<dbReference type="InParanoid" id="Q5AQZ4"/>
<dbReference type="OMA" id="IWRAFVY"/>
<dbReference type="OrthoDB" id="6501611at2759"/>
<dbReference type="Proteomes" id="UP000000560">
    <property type="component" value="Chromosome VIII"/>
</dbReference>
<dbReference type="GO" id="GO:0005576">
    <property type="term" value="C:extracellular region"/>
    <property type="evidence" value="ECO:0007669"/>
    <property type="project" value="UniProtKB-SubCell"/>
</dbReference>
<dbReference type="GO" id="GO:0046559">
    <property type="term" value="F:alpha-glucuronidase activity"/>
    <property type="evidence" value="ECO:0000314"/>
    <property type="project" value="UniProtKB"/>
</dbReference>
<dbReference type="GO" id="GO:0004553">
    <property type="term" value="F:hydrolase activity, hydrolyzing O-glycosyl compounds"/>
    <property type="evidence" value="ECO:0000314"/>
    <property type="project" value="AspGD"/>
</dbReference>
<dbReference type="GO" id="GO:0045493">
    <property type="term" value="P:xylan catabolic process"/>
    <property type="evidence" value="ECO:0000314"/>
    <property type="project" value="UniProtKB"/>
</dbReference>
<dbReference type="CDD" id="cd02795">
    <property type="entry name" value="CBM6-CBM35-CBM36_like"/>
    <property type="match status" value="1"/>
</dbReference>
<dbReference type="FunFam" id="3.20.20.80:FF:000096">
    <property type="entry name" value="Xylan alpha-1,2-glucuronidase"/>
    <property type="match status" value="1"/>
</dbReference>
<dbReference type="FunFam" id="3.90.1330.10:FF:000001">
    <property type="entry name" value="Xylan alpha-1,2-glucuronidase"/>
    <property type="match status" value="1"/>
</dbReference>
<dbReference type="Gene3D" id="3.90.1330.10">
    <property type="entry name" value="Alpha-glucuronidase, C-terminal domain"/>
    <property type="match status" value="1"/>
</dbReference>
<dbReference type="Gene3D" id="3.30.379.10">
    <property type="entry name" value="Chitobiase/beta-hexosaminidase domain 2-like"/>
    <property type="match status" value="1"/>
</dbReference>
<dbReference type="Gene3D" id="3.20.20.80">
    <property type="entry name" value="Glycosidases"/>
    <property type="match status" value="1"/>
</dbReference>
<dbReference type="InterPro" id="IPR037054">
    <property type="entry name" value="A-glucoronidase_C_sf"/>
</dbReference>
<dbReference type="InterPro" id="IPR011395">
    <property type="entry name" value="Glyco_hydro_67_aGlcAse"/>
</dbReference>
<dbReference type="InterPro" id="IPR005154">
    <property type="entry name" value="Glyco_hydro_67_aGlcAse_N"/>
</dbReference>
<dbReference type="InterPro" id="IPR011099">
    <property type="entry name" value="Glyco_hydro_67_C"/>
</dbReference>
<dbReference type="InterPro" id="IPR011100">
    <property type="entry name" value="Glyco_hydro_67_cat"/>
</dbReference>
<dbReference type="InterPro" id="IPR017853">
    <property type="entry name" value="Glycoside_hydrolase_SF"/>
</dbReference>
<dbReference type="InterPro" id="IPR029018">
    <property type="entry name" value="Hex-like_dom2"/>
</dbReference>
<dbReference type="PANTHER" id="PTHR39207">
    <property type="entry name" value="ALPHA-GLUCURONIDASE A"/>
    <property type="match status" value="1"/>
</dbReference>
<dbReference type="PANTHER" id="PTHR39207:SF1">
    <property type="entry name" value="ALPHA-GLUCURONIDASE A"/>
    <property type="match status" value="1"/>
</dbReference>
<dbReference type="Pfam" id="PF07477">
    <property type="entry name" value="Glyco_hydro_67C"/>
    <property type="match status" value="1"/>
</dbReference>
<dbReference type="Pfam" id="PF07488">
    <property type="entry name" value="Glyco_hydro_67M"/>
    <property type="match status" value="1"/>
</dbReference>
<dbReference type="Pfam" id="PF03648">
    <property type="entry name" value="Glyco_hydro_67N"/>
    <property type="match status" value="1"/>
</dbReference>
<dbReference type="PIRSF" id="PIRSF029900">
    <property type="entry name" value="Alpha-glucuronds"/>
    <property type="match status" value="1"/>
</dbReference>
<dbReference type="SUPFAM" id="SSF51445">
    <property type="entry name" value="(Trans)glycosidases"/>
    <property type="match status" value="1"/>
</dbReference>
<dbReference type="SUPFAM" id="SSF55545">
    <property type="entry name" value="beta-N-acetylhexosaminidase-like domain"/>
    <property type="match status" value="1"/>
</dbReference>
<name>AGUA_EMENI</name>
<sequence>MRSFLLLTALLGVAAVAEDGLAAWLRYAPIPHAKSYHKNLPSVIVPLNATAGRPIDTAAYELVDGIKGIFGKRVTLKNETRDDPNLPAVTVGTVEAYAEAGGDVSSVPELIDDGYYLSVAGPSVLILGQNERGALYGTFQYLERLAQGKVSDTSFASNPSAPIRWVNQWDNLQDGGTHGSVERGYGGDSIFFWDGRVRDDLTRASQYARLLASIGLNAVIVNNVNANETILTQENMDGVARIADAFRPYGIQLGLSLNFASPQSLGGLDTFDPFDERVISWWGEITDELYERIPDMAGYLVKANSEGQPGPFTYNRTLADGANLFARALQPHGGIVLFRAFVYDHENLNETLDWKADRANAAVEFFDGLDPQFEDNVVIQIKNGPIDFQVREPVSPLFAHLSQTASAVELQVTQEYLGQQCHLVYLAPMWKEVLDFDLRVDGKDSVVSDIVSGRRFNNTLGGYAGVVNVGLNTTWLGSHLAMSNLYAYGRLAWDPSADSVELLQEWIKMTFSHDQEVVDVITKMSMESWPAYENYSGNLGIQTLTDILLGHYGPNPASQDGNPWGQWTRADADSIGMDRTVWNGTGNAGQYPEEVYQMYENIDTTPDNLLLWFHHVPYTQRLKSGKTVIQHFYDAHYRGSATAQTFVSLWKTIKGKIDKERYEHVLFRLVYQAGHALVWRDSITNFYYNKSGIPDEAGRVGNHPYRIEAEDMELDGYEPYLVSPFEAASGSHCIVTSNNSTEGRASTPLKVKNGKYDIAVNYFDQAIGNSTWRLFLDDDLVGEWKGDLEYILGRAPSPYIDGQTAARITFKHVHIKSRSTLSIVGIPDGMEPAPIDYVSILPEGVID</sequence>